<comment type="function">
    <text evidence="9 13">AMP/ATP-binding subunit of AMP-activated protein kinase (AMPK), an energy sensor protein kinase that plays a key role in regulating cellular energy metabolism (PubMed:14722619, PubMed:24563466). In response to reduction of intracellular ATP levels, AMPK activates energy-producing pathways and inhibits energy-consuming processes: inhibits protein, carbohydrate and lipid biosynthesis, as well as cell growth and proliferation (PubMed:14722619, PubMed:24563466). AMPK acts via direct phosphorylation of metabolic enzymes, and by longer-term effects via phosphorylation of transcription regulators (PubMed:14722619, PubMed:24563466). Also acts as a regulator of cellular polarity by remodeling the actin cytoskeleton; probably by indirectly activating myosin (PubMed:14722619, PubMed:24563466). Gamma non-catalytic subunit mediates binding to AMP, ADP and ATP, leading to activate or inhibit AMPK: AMP-binding results in allosteric activation of alpha catalytic subunit (PRKAA1 or PRKAA2) both by inducing phosphorylation and preventing dephosphorylation of catalytic subunits (PubMed:14722619, PubMed:24563466). ADP also stimulates phosphorylation, without stimulating already phosphorylated catalytic subunit (PubMed:14722619, PubMed:24563466). ATP promotes dephosphorylation of catalytic subunit, rendering the AMPK enzyme inactive (PubMed:14722619, PubMed:24563466).</text>
</comment>
<comment type="subunit">
    <text>AMPK is a heterotrimer of an alpha catalytic subunit (PRKAA1 or PRKAA2), a beta (PRKAB1 or PRKAB2) and a gamma non-catalytic subunits (PRKAG1, PRKAG2 or PRKAG3). Interacts with FNIP1 and FNIP2.</text>
</comment>
<comment type="interaction">
    <interactant intactId="EBI-2959705">
        <id>Q9UGJ0</id>
    </interactant>
    <interactant intactId="EBI-25836642">
        <id>Q8NE08</id>
        <label>COL25A1</label>
    </interactant>
    <organismsDiffer>false</organismsDiffer>
    <experiments>3</experiments>
</comment>
<comment type="interaction">
    <interactant intactId="EBI-2959705">
        <id>Q9UGJ0</id>
    </interactant>
    <interactant intactId="EBI-10178578">
        <id>I6L9F6</id>
        <label>NEFL</label>
    </interactant>
    <organismsDiffer>false</organismsDiffer>
    <experiments>3</experiments>
</comment>
<comment type="interaction">
    <interactant intactId="EBI-2959705">
        <id>Q9UGJ0</id>
    </interactant>
    <interactant intactId="EBI-307104">
        <id>Q13501</id>
        <label>SQSTM1</label>
    </interactant>
    <organismsDiffer>false</organismsDiffer>
    <experiments>3</experiments>
</comment>
<comment type="interaction">
    <interactant intactId="EBI-25939641">
        <id>Q9UGJ0-3</id>
    </interactant>
    <interactant intactId="EBI-77613">
        <id>P05067</id>
        <label>APP</label>
    </interactant>
    <organismsDiffer>false</organismsDiffer>
    <experiments>3</experiments>
</comment>
<comment type="alternative products">
    <event type="alternative splicing"/>
    <isoform>
        <id>Q9UGJ0-1</id>
        <name>A</name>
        <sequence type="displayed"/>
    </isoform>
    <isoform>
        <id>Q9UGJ0-2</id>
        <name>B</name>
        <sequence type="described" ref="VSP_000261"/>
    </isoform>
    <isoform>
        <id>Q9UGJ0-3</id>
        <name>C</name>
        <sequence type="described" ref="VSP_015589"/>
    </isoform>
</comment>
<comment type="tissue specificity">
    <text>Isoform B is ubiquitously expressed except in liver and thymus. The highest level is detected in heart with abundant expression in placenta and testis.</text>
</comment>
<comment type="domain">
    <text>The AMPK pseudosubstrate motif resembles the sequence around sites phosphorylated on target proteins of AMPK, except the presence of a non-phosphorylatable residue in place of Ser. In the absence of AMP this pseudosubstrate sequence may bind to the active site groove on the alpha subunit (PRKAA1 or PRKAA2), preventing phosphorylation by the upstream activating kinase STK11/LKB1.</text>
</comment>
<comment type="domain">
    <text evidence="1">The 4 CBS domains mediate binding to nucleotides. Of the 4 potential nucleotide-binding sites, 3 are occupied, designated as sites 1, 3, and 4 based on the CBS modules that provide the acidic residue for coordination with the 2'- and 3'-hydroxyl groups of the ribose of AMP. Of these, site 4 appears to be a structural site that retains a tightly held AMP molecule (AMP 3). The 2 remaining sites, 1 and 3, can bind either AMP, ADP or ATP. Site 1 (AMP, ADP or ATP 1) is the high-affinity binding site and likely accommodates AMP or ADP. Site 3 (AMP, ADP or ATP 2) is the weakest nucleotide-binding site on the gamma subunit, yet it is exquisitely sensitive to changes in nucleotide levels and this allows AMPK to respond rapidly to changes in cellular energy status. Site 3 is likely to be responsible for protection of a conserved threonine in the activation loop of the alpha catalytic subunit through conformational changes induced by binding of AMP or ADP.</text>
</comment>
<comment type="PTM">
    <text evidence="12">Phosphorylated by ULK1; leading to negatively regulate AMPK activity and suggesting the existence of a regulatory feedback loop between ULK1 and AMPK.</text>
</comment>
<comment type="PTM">
    <text evidence="13">Glycosylated; O-GlcNAcylated by OGT, promoting the AMP-activated protein kinase (AMPK) activity.</text>
</comment>
<comment type="disease" evidence="6 7 9">
    <disease id="DI-01150">
        <name>Wolff-Parkinson-White syndrome</name>
        <acronym>WPW</acronym>
        <description>A supernormal conduction disorder characterized by the presence of one or several accessory atrioventricular connections, which can lead to episodes of sporadic tachycardia.</description>
        <dbReference type="MIM" id="194200"/>
    </disease>
    <text>The disease is caused by variants affecting the gene represented in this entry.</text>
</comment>
<comment type="disease" evidence="5 8">
    <disease id="DI-00245">
        <name>Cardiomyopathy, familial hypertrophic, 6</name>
        <acronym>CMH6</acronym>
        <description>A hereditary heart disorder characterized by ventricular hypertrophy, which is usually asymmetric and often involves the interventricular septum. The symptoms include dyspnea, syncope, collapse, palpitations, and chest pain. They can be readily provoked by exercise. The disorder has inter- and intrafamilial variability ranging from benign to malignant forms with high risk of cardiac failure and sudden cardiac death. CMH6 patients present Wolff-Parkinson-White ventricular preexcitation, enlarged myocytes without myofiber disarray, and glycogen-containing cytosolic vacuoles within cardiomyocytes.</description>
        <dbReference type="MIM" id="600858"/>
    </disease>
    <text>The disease is caused by variants affecting the gene represented in this entry.</text>
</comment>
<comment type="disease" evidence="10">
    <disease id="DI-01676">
        <name>Glycogen storage disease of heart lethal congenital</name>
        <acronym>GSDH</acronym>
        <description>Rare disease which leads to death within a few weeks to a few months after birth, through heart failure and respiratory compromise.</description>
        <dbReference type="MIM" id="261740"/>
    </disease>
    <text>The disease is caused by variants affecting the gene represented in this entry.</text>
</comment>
<comment type="similarity">
    <text evidence="20">Belongs to the 5'-AMP-activated protein kinase gamma subunit family.</text>
</comment>
<comment type="sequence caution" evidence="20">
    <conflict type="erroneous initiation">
        <sequence resource="EMBL-CDS" id="AAH20540"/>
    </conflict>
    <text>Truncated N-terminus.</text>
</comment>
<comment type="sequence caution" evidence="20">
    <conflict type="erroneous gene model prediction">
        <sequence resource="EMBL-CDS" id="AAS02032"/>
    </conflict>
</comment>
<comment type="sequence caution" evidence="20">
    <conflict type="frameshift">
        <sequence resource="EMBL-CDS" id="BAA84695"/>
    </conflict>
    <text>Frameshifts are upstream of the initiating Met of isoform B.</text>
</comment>
<name>AAKG2_HUMAN</name>
<organism>
    <name type="scientific">Homo sapiens</name>
    <name type="common">Human</name>
    <dbReference type="NCBI Taxonomy" id="9606"/>
    <lineage>
        <taxon>Eukaryota</taxon>
        <taxon>Metazoa</taxon>
        <taxon>Chordata</taxon>
        <taxon>Craniata</taxon>
        <taxon>Vertebrata</taxon>
        <taxon>Euteleostomi</taxon>
        <taxon>Mammalia</taxon>
        <taxon>Eutheria</taxon>
        <taxon>Euarchontoglires</taxon>
        <taxon>Primates</taxon>
        <taxon>Haplorrhini</taxon>
        <taxon>Catarrhini</taxon>
        <taxon>Hominidae</taxon>
        <taxon>Homo</taxon>
    </lineage>
</organism>
<accession>Q9UGJ0</accession>
<accession>Q53Y07</accession>
<accession>Q6NUI0</accession>
<accession>Q75MP4</accession>
<accession>Q9NUZ9</accession>
<accession>Q9UDN8</accession>
<accession>Q9ULX8</accession>
<sequence>MGSAVMDTKKKKDVSSPGGSGGKKNASQKRRSLRVHIPDLSSFAMPLLDGDLEGSGKHSSRKVDSPFGPGSPSKGFFSRGPQPRPSSPMSAPVRPKTSPGSPKTVFPFSYQESPPRSPRRMSFSGIFRSSSKESSPNSNPATSPGGIRFFSRSRKTSGLSSSPSTPTQVTKQHTFPLESYKHEPERLENRIYASSSPPDTGQRFCPSSFQSPTRPPLASPTHYAPSKAAALAAALGPAEAGMLEKLEFEDEAVEDSESGVYMRFMRSHKCYDIVPTSSKLVVFDTTLQVKKAFFALVANGVRAAPLWESKKQSFVGMLTITDFINILHRYYKSPMVQIYELEEHKIETWRELYLQETFKPLVNISPDASLFDAVYSLIKNKIHRLPVIDPISGNALYILTHKRILKFLQLFMSDMPKPAFMKQNLDELGIGTYHNIAFIHPDTPIIKALNIFVERRISALPVVDESGKVVDIYSKFDVINLAAEKTYNNLDITVTQALQHRSQYFEGVVKCNKLEILETIVDRIVRAEVHRLVVVNEADSIVGIISLSDILQALILTPAGAKQKETETE</sequence>
<gene>
    <name type="primary">PRKAG2</name>
</gene>
<evidence type="ECO:0000250" key="1">
    <source>
        <dbReference type="UniProtKB" id="P80385"/>
    </source>
</evidence>
<evidence type="ECO:0000250" key="2">
    <source>
        <dbReference type="UniProtKB" id="Q91WG5"/>
    </source>
</evidence>
<evidence type="ECO:0000255" key="3">
    <source>
        <dbReference type="PROSITE-ProRule" id="PRU00703"/>
    </source>
</evidence>
<evidence type="ECO:0000256" key="4">
    <source>
        <dbReference type="SAM" id="MobiDB-lite"/>
    </source>
</evidence>
<evidence type="ECO:0000269" key="5">
    <source>
    </source>
</evidence>
<evidence type="ECO:0000269" key="6">
    <source>
    </source>
</evidence>
<evidence type="ECO:0000269" key="7">
    <source>
    </source>
</evidence>
<evidence type="ECO:0000269" key="8">
    <source>
    </source>
</evidence>
<evidence type="ECO:0000269" key="9">
    <source>
    </source>
</evidence>
<evidence type="ECO:0000269" key="10">
    <source>
    </source>
</evidence>
<evidence type="ECO:0000269" key="11">
    <source>
    </source>
</evidence>
<evidence type="ECO:0000269" key="12">
    <source>
    </source>
</evidence>
<evidence type="ECO:0000269" key="13">
    <source>
    </source>
</evidence>
<evidence type="ECO:0000269" key="14">
    <source>
    </source>
</evidence>
<evidence type="ECO:0000303" key="15">
    <source>
    </source>
</evidence>
<evidence type="ECO:0000303" key="16">
    <source>
    </source>
</evidence>
<evidence type="ECO:0000303" key="17">
    <source>
    </source>
</evidence>
<evidence type="ECO:0000303" key="18">
    <source ref="1"/>
</evidence>
<evidence type="ECO:0000303" key="19">
    <source ref="5"/>
</evidence>
<evidence type="ECO:0000305" key="20"/>
<evidence type="ECO:0007744" key="21">
    <source>
    </source>
</evidence>
<dbReference type="EMBL" id="AB025580">
    <property type="protein sequence ID" value="BAA84695.1"/>
    <property type="status" value="ALT_FRAME"/>
    <property type="molecule type" value="mRNA"/>
</dbReference>
<dbReference type="EMBL" id="AJ249976">
    <property type="protein sequence ID" value="CAB65116.1"/>
    <property type="molecule type" value="mRNA"/>
</dbReference>
<dbReference type="EMBL" id="AF087875">
    <property type="protein sequence ID" value="AAK00413.1"/>
    <property type="molecule type" value="mRNA"/>
</dbReference>
<dbReference type="EMBL" id="AK001887">
    <property type="protein sequence ID" value="BAA91962.1"/>
    <property type="molecule type" value="mRNA"/>
</dbReference>
<dbReference type="EMBL" id="BT007127">
    <property type="protein sequence ID" value="AAP35791.1"/>
    <property type="molecule type" value="mRNA"/>
</dbReference>
<dbReference type="EMBL" id="AC006358">
    <property type="protein sequence ID" value="AAS02032.1"/>
    <property type="status" value="ALT_SEQ"/>
    <property type="molecule type" value="Genomic_DNA"/>
</dbReference>
<dbReference type="EMBL" id="AC006966">
    <property type="protein sequence ID" value="AAF03528.2"/>
    <property type="molecule type" value="Genomic_DNA"/>
</dbReference>
<dbReference type="EMBL" id="AC093583">
    <property type="status" value="NOT_ANNOTATED_CDS"/>
    <property type="molecule type" value="Genomic_DNA"/>
</dbReference>
<dbReference type="EMBL" id="BC020540">
    <property type="protein sequence ID" value="AAH20540.2"/>
    <property type="status" value="ALT_INIT"/>
    <property type="molecule type" value="mRNA"/>
</dbReference>
<dbReference type="EMBL" id="BC068598">
    <property type="protein sequence ID" value="AAH68598.1"/>
    <property type="molecule type" value="mRNA"/>
</dbReference>
<dbReference type="CCDS" id="CCDS43683.1">
    <molecule id="Q9UGJ0-3"/>
</dbReference>
<dbReference type="CCDS" id="CCDS47752.1">
    <molecule id="Q9UGJ0-2"/>
</dbReference>
<dbReference type="CCDS" id="CCDS5928.1">
    <molecule id="Q9UGJ0-1"/>
</dbReference>
<dbReference type="RefSeq" id="NP_001035723.1">
    <molecule id="Q9UGJ0-3"/>
    <property type="nucleotide sequence ID" value="NM_001040633.2"/>
</dbReference>
<dbReference type="RefSeq" id="NP_001291456.1">
    <property type="nucleotide sequence ID" value="NM_001304527.1"/>
</dbReference>
<dbReference type="RefSeq" id="NP_001291460.1">
    <molecule id="Q9UGJ0-2"/>
    <property type="nucleotide sequence ID" value="NM_001304531.2"/>
</dbReference>
<dbReference type="RefSeq" id="NP_001393953.1">
    <molecule id="Q9UGJ0-3"/>
    <property type="nucleotide sequence ID" value="NM_001407024.1"/>
</dbReference>
<dbReference type="RefSeq" id="NP_057287.2">
    <molecule id="Q9UGJ0-1"/>
    <property type="nucleotide sequence ID" value="NM_016203.3"/>
</dbReference>
<dbReference type="RefSeq" id="NP_077747.1">
    <molecule id="Q9UGJ0-2"/>
    <property type="nucleotide sequence ID" value="NM_024429.2"/>
</dbReference>
<dbReference type="RefSeq" id="XP_016867759.1">
    <property type="nucleotide sequence ID" value="XM_017012270.1"/>
</dbReference>
<dbReference type="SMR" id="Q9UGJ0"/>
<dbReference type="BioGRID" id="119531">
    <property type="interactions" value="66"/>
</dbReference>
<dbReference type="ComplexPortal" id="CPX-5786">
    <property type="entry name" value="AMPK complex, alpha1-beta1-gamma2 variant"/>
</dbReference>
<dbReference type="ComplexPortal" id="CPX-5844">
    <property type="entry name" value="AMPK complex, alpha2-beta1-gamma2 variant"/>
</dbReference>
<dbReference type="ComplexPortal" id="CPX-5845">
    <property type="entry name" value="AMPK complex, alpha2-beta2-gamma2 variant"/>
</dbReference>
<dbReference type="ComplexPortal" id="CPX-5846">
    <property type="entry name" value="AMPK complex, alpha1-beta2-gamma2 variant"/>
</dbReference>
<dbReference type="FunCoup" id="Q9UGJ0">
    <property type="interactions" value="1560"/>
</dbReference>
<dbReference type="IntAct" id="Q9UGJ0">
    <property type="interactions" value="47"/>
</dbReference>
<dbReference type="MINT" id="Q9UGJ0"/>
<dbReference type="STRING" id="9606.ENSP00000287878"/>
<dbReference type="BindingDB" id="Q9UGJ0"/>
<dbReference type="ChEMBL" id="CHEMBL2453"/>
<dbReference type="DrugBank" id="DB00945">
    <property type="generic name" value="Acetylsalicylic acid"/>
</dbReference>
<dbReference type="DrugBank" id="DB00131">
    <property type="generic name" value="Adenosine phosphate"/>
</dbReference>
<dbReference type="DrugBank" id="DB12010">
    <property type="generic name" value="Fostamatinib"/>
</dbReference>
<dbReference type="DrugBank" id="DB00273">
    <property type="generic name" value="Topiramate"/>
</dbReference>
<dbReference type="DrugCentral" id="Q9UGJ0"/>
<dbReference type="GlyGen" id="Q9UGJ0">
    <property type="glycosylation" value="5 sites, 1 O-linked glycan (5 sites)"/>
</dbReference>
<dbReference type="iPTMnet" id="Q9UGJ0"/>
<dbReference type="PhosphoSitePlus" id="Q9UGJ0"/>
<dbReference type="BioMuta" id="PRKAG2"/>
<dbReference type="DMDM" id="14285344"/>
<dbReference type="jPOST" id="Q9UGJ0"/>
<dbReference type="MassIVE" id="Q9UGJ0"/>
<dbReference type="PaxDb" id="9606-ENSP00000287878"/>
<dbReference type="PeptideAtlas" id="Q9UGJ0"/>
<dbReference type="ProteomicsDB" id="84222">
    <molecule id="Q9UGJ0-1"/>
</dbReference>
<dbReference type="ProteomicsDB" id="84223">
    <molecule id="Q9UGJ0-2"/>
</dbReference>
<dbReference type="ProteomicsDB" id="84224">
    <molecule id="Q9UGJ0-3"/>
</dbReference>
<dbReference type="Pumba" id="Q9UGJ0"/>
<dbReference type="Antibodypedia" id="1327">
    <property type="antibodies" value="156 antibodies from 31 providers"/>
</dbReference>
<dbReference type="DNASU" id="51422"/>
<dbReference type="Ensembl" id="ENST00000287878.9">
    <molecule id="Q9UGJ0-1"/>
    <property type="protein sequence ID" value="ENSP00000287878.3"/>
    <property type="gene ID" value="ENSG00000106617.16"/>
</dbReference>
<dbReference type="Ensembl" id="ENST00000392801.6">
    <molecule id="Q9UGJ0-3"/>
    <property type="protein sequence ID" value="ENSP00000376549.2"/>
    <property type="gene ID" value="ENSG00000106617.16"/>
</dbReference>
<dbReference type="Ensembl" id="ENST00000418337.6">
    <molecule id="Q9UGJ0-2"/>
    <property type="protein sequence ID" value="ENSP00000387386.2"/>
    <property type="gene ID" value="ENSG00000106617.16"/>
</dbReference>
<dbReference type="Ensembl" id="ENST00000476632.2">
    <molecule id="Q9UGJ0-2"/>
    <property type="protein sequence ID" value="ENSP00000419493.2"/>
    <property type="gene ID" value="ENSG00000106617.16"/>
</dbReference>
<dbReference type="Ensembl" id="ENST00000651378.1">
    <molecule id="Q9UGJ0-2"/>
    <property type="protein sequence ID" value="ENSP00000499103.1"/>
    <property type="gene ID" value="ENSG00000106617.16"/>
</dbReference>
<dbReference type="Ensembl" id="ENST00000651764.1">
    <molecule id="Q9UGJ0-3"/>
    <property type="protein sequence ID" value="ENSP00000498796.1"/>
    <property type="gene ID" value="ENSG00000106617.16"/>
</dbReference>
<dbReference type="Ensembl" id="ENST00000652159.1">
    <molecule id="Q9UGJ0-3"/>
    <property type="protein sequence ID" value="ENSP00000499025.1"/>
    <property type="gene ID" value="ENSG00000106617.16"/>
</dbReference>
<dbReference type="GeneID" id="51422"/>
<dbReference type="KEGG" id="hsa:51422"/>
<dbReference type="MANE-Select" id="ENST00000287878.9">
    <property type="protein sequence ID" value="ENSP00000287878.3"/>
    <property type="RefSeq nucleotide sequence ID" value="NM_016203.4"/>
    <property type="RefSeq protein sequence ID" value="NP_057287.2"/>
</dbReference>
<dbReference type="UCSC" id="uc003wki.4">
    <molecule id="Q9UGJ0-1"/>
    <property type="organism name" value="human"/>
</dbReference>
<dbReference type="AGR" id="HGNC:9386"/>
<dbReference type="CTD" id="51422"/>
<dbReference type="DisGeNET" id="51422"/>
<dbReference type="GeneCards" id="PRKAG2"/>
<dbReference type="GeneReviews" id="PRKAG2"/>
<dbReference type="HGNC" id="HGNC:9386">
    <property type="gene designation" value="PRKAG2"/>
</dbReference>
<dbReference type="HPA" id="ENSG00000106617">
    <property type="expression patterns" value="Tissue enhanced (heart)"/>
</dbReference>
<dbReference type="MalaCards" id="PRKAG2"/>
<dbReference type="MIM" id="194200">
    <property type="type" value="phenotype"/>
</dbReference>
<dbReference type="MIM" id="261740">
    <property type="type" value="phenotype"/>
</dbReference>
<dbReference type="MIM" id="600858">
    <property type="type" value="phenotype"/>
</dbReference>
<dbReference type="MIM" id="602743">
    <property type="type" value="gene"/>
</dbReference>
<dbReference type="neXtProt" id="NX_Q9UGJ0"/>
<dbReference type="OpenTargets" id="ENSG00000106617"/>
<dbReference type="Orphanet" id="439854">
    <property type="disease" value="Fatal congenital hypertrophic cardiomyopathy due to glycogen storage disease"/>
</dbReference>
<dbReference type="PharmGKB" id="PA33752"/>
<dbReference type="VEuPathDB" id="HostDB:ENSG00000106617"/>
<dbReference type="eggNOG" id="KOG1764">
    <property type="taxonomic scope" value="Eukaryota"/>
</dbReference>
<dbReference type="GeneTree" id="ENSGT00950000183019"/>
<dbReference type="HOGENOM" id="CLU_021740_3_0_1"/>
<dbReference type="InParanoid" id="Q9UGJ0"/>
<dbReference type="OMA" id="XVQIYEL"/>
<dbReference type="OrthoDB" id="449052at2759"/>
<dbReference type="PAN-GO" id="Q9UGJ0">
    <property type="GO annotations" value="9 GO annotations based on evolutionary models"/>
</dbReference>
<dbReference type="PhylomeDB" id="Q9UGJ0"/>
<dbReference type="TreeFam" id="TF313247"/>
<dbReference type="PathwayCommons" id="Q9UGJ0"/>
<dbReference type="Reactome" id="R-HSA-1445148">
    <property type="pathway name" value="Translocation of SLC2A4 (GLUT4) to the plasma membrane"/>
</dbReference>
<dbReference type="Reactome" id="R-HSA-1632852">
    <property type="pathway name" value="Macroautophagy"/>
</dbReference>
<dbReference type="Reactome" id="R-HSA-163680">
    <property type="pathway name" value="AMPK inhibits chREBP transcriptional activation activity"/>
</dbReference>
<dbReference type="Reactome" id="R-HSA-200425">
    <property type="pathway name" value="Carnitine shuttle"/>
</dbReference>
<dbReference type="Reactome" id="R-HSA-2151209">
    <property type="pathway name" value="Activation of PPARGC1A (PGC-1alpha) by phosphorylation"/>
</dbReference>
<dbReference type="Reactome" id="R-HSA-380972">
    <property type="pathway name" value="Energy dependent regulation of mTOR by LKB1-AMPK"/>
</dbReference>
<dbReference type="Reactome" id="R-HSA-5628897">
    <property type="pathway name" value="TP53 Regulates Metabolic Genes"/>
</dbReference>
<dbReference type="Reactome" id="R-HSA-6804756">
    <property type="pathway name" value="Regulation of TP53 Activity through Phosphorylation"/>
</dbReference>
<dbReference type="Reactome" id="R-HSA-9613354">
    <property type="pathway name" value="Lipophagy"/>
</dbReference>
<dbReference type="Reactome" id="R-HSA-9619483">
    <property type="pathway name" value="Activation of AMPK downstream of NMDARs"/>
</dbReference>
<dbReference type="SignaLink" id="Q9UGJ0"/>
<dbReference type="SIGNOR" id="Q9UGJ0"/>
<dbReference type="BioGRID-ORCS" id="51422">
    <property type="hits" value="20 hits in 1164 CRISPR screens"/>
</dbReference>
<dbReference type="ChiTaRS" id="PRKAG2">
    <property type="organism name" value="human"/>
</dbReference>
<dbReference type="GeneWiki" id="PRKAG2"/>
<dbReference type="GenomeRNAi" id="51422"/>
<dbReference type="Pharos" id="Q9UGJ0">
    <property type="development level" value="Tchem"/>
</dbReference>
<dbReference type="PRO" id="PR:Q9UGJ0"/>
<dbReference type="Proteomes" id="UP000005640">
    <property type="component" value="Chromosome 7"/>
</dbReference>
<dbReference type="RNAct" id="Q9UGJ0">
    <property type="molecule type" value="protein"/>
</dbReference>
<dbReference type="Bgee" id="ENSG00000106617">
    <property type="expression patterns" value="Expressed in right atrium auricular region and 174 other cell types or tissues"/>
</dbReference>
<dbReference type="ExpressionAtlas" id="Q9UGJ0">
    <property type="expression patterns" value="baseline and differential"/>
</dbReference>
<dbReference type="GO" id="GO:0005737">
    <property type="term" value="C:cytoplasm"/>
    <property type="evidence" value="ECO:0000318"/>
    <property type="project" value="GO_Central"/>
</dbReference>
<dbReference type="GO" id="GO:0005829">
    <property type="term" value="C:cytosol"/>
    <property type="evidence" value="ECO:0000304"/>
    <property type="project" value="Reactome"/>
</dbReference>
<dbReference type="GO" id="GO:0005615">
    <property type="term" value="C:extracellular space"/>
    <property type="evidence" value="ECO:0007005"/>
    <property type="project" value="UniProtKB"/>
</dbReference>
<dbReference type="GO" id="GO:0005654">
    <property type="term" value="C:nucleoplasm"/>
    <property type="evidence" value="ECO:0000304"/>
    <property type="project" value="Reactome"/>
</dbReference>
<dbReference type="GO" id="GO:0031588">
    <property type="term" value="C:nucleotide-activated protein kinase complex"/>
    <property type="evidence" value="ECO:0000314"/>
    <property type="project" value="BHF-UCL"/>
</dbReference>
<dbReference type="GO" id="GO:0005634">
    <property type="term" value="C:nucleus"/>
    <property type="evidence" value="ECO:0000318"/>
    <property type="project" value="GO_Central"/>
</dbReference>
<dbReference type="GO" id="GO:0043531">
    <property type="term" value="F:ADP binding"/>
    <property type="evidence" value="ECO:0000314"/>
    <property type="project" value="BHF-UCL"/>
</dbReference>
<dbReference type="GO" id="GO:0016208">
    <property type="term" value="F:AMP binding"/>
    <property type="evidence" value="ECO:0000318"/>
    <property type="project" value="GO_Central"/>
</dbReference>
<dbReference type="GO" id="GO:0004679">
    <property type="term" value="F:AMP-activated protein kinase activity"/>
    <property type="evidence" value="ECO:0007669"/>
    <property type="project" value="Ensembl"/>
</dbReference>
<dbReference type="GO" id="GO:0005524">
    <property type="term" value="F:ATP binding"/>
    <property type="evidence" value="ECO:0000314"/>
    <property type="project" value="BHF-UCL"/>
</dbReference>
<dbReference type="GO" id="GO:0004862">
    <property type="term" value="F:cAMP-dependent protein kinase inhibitor activity"/>
    <property type="evidence" value="ECO:0000314"/>
    <property type="project" value="BHF-UCL"/>
</dbReference>
<dbReference type="GO" id="GO:0008603">
    <property type="term" value="F:cAMP-dependent protein kinase regulator activity"/>
    <property type="evidence" value="ECO:0000315"/>
    <property type="project" value="BHF-UCL"/>
</dbReference>
<dbReference type="GO" id="GO:0008607">
    <property type="term" value="F:phosphorylase kinase regulator activity"/>
    <property type="evidence" value="ECO:0000315"/>
    <property type="project" value="BHF-UCL"/>
</dbReference>
<dbReference type="GO" id="GO:0030295">
    <property type="term" value="F:protein kinase activator activity"/>
    <property type="evidence" value="ECO:0000315"/>
    <property type="project" value="BHF-UCL"/>
</dbReference>
<dbReference type="GO" id="GO:0019901">
    <property type="term" value="F:protein kinase binding"/>
    <property type="evidence" value="ECO:0000314"/>
    <property type="project" value="BHF-UCL"/>
</dbReference>
<dbReference type="GO" id="GO:0019887">
    <property type="term" value="F:protein kinase regulator activity"/>
    <property type="evidence" value="ECO:0000314"/>
    <property type="project" value="UniProtKB"/>
</dbReference>
<dbReference type="GO" id="GO:0006754">
    <property type="term" value="P:ATP biosynthetic process"/>
    <property type="evidence" value="ECO:0000304"/>
    <property type="project" value="BHF-UCL"/>
</dbReference>
<dbReference type="GO" id="GO:0042149">
    <property type="term" value="P:cellular response to glucose starvation"/>
    <property type="evidence" value="ECO:0000318"/>
    <property type="project" value="GO_Central"/>
</dbReference>
<dbReference type="GO" id="GO:0031669">
    <property type="term" value="P:cellular response to nutrient levels"/>
    <property type="evidence" value="ECO:0000250"/>
    <property type="project" value="ComplexPortal"/>
</dbReference>
<dbReference type="GO" id="GO:0006633">
    <property type="term" value="P:fatty acid biosynthetic process"/>
    <property type="evidence" value="ECO:0007669"/>
    <property type="project" value="UniProtKB-KW"/>
</dbReference>
<dbReference type="GO" id="GO:0005977">
    <property type="term" value="P:glycogen metabolic process"/>
    <property type="evidence" value="ECO:0000315"/>
    <property type="project" value="BHF-UCL"/>
</dbReference>
<dbReference type="GO" id="GO:0035556">
    <property type="term" value="P:intracellular signal transduction"/>
    <property type="evidence" value="ECO:0000315"/>
    <property type="project" value="BHF-UCL"/>
</dbReference>
<dbReference type="GO" id="GO:0045722">
    <property type="term" value="P:positive regulation of gluconeogenesis"/>
    <property type="evidence" value="ECO:0000318"/>
    <property type="project" value="GO_Central"/>
</dbReference>
<dbReference type="GO" id="GO:0043609">
    <property type="term" value="P:regulation of carbon utilization"/>
    <property type="evidence" value="ECO:0000318"/>
    <property type="project" value="GO_Central"/>
</dbReference>
<dbReference type="GO" id="GO:0051726">
    <property type="term" value="P:regulation of cell cycle"/>
    <property type="evidence" value="ECO:0000304"/>
    <property type="project" value="Reactome"/>
</dbReference>
<dbReference type="GO" id="GO:0046324">
    <property type="term" value="P:regulation of D-glucose import"/>
    <property type="evidence" value="ECO:0000304"/>
    <property type="project" value="BHF-UCL"/>
</dbReference>
<dbReference type="GO" id="GO:0019217">
    <property type="term" value="P:regulation of fatty acid metabolic process"/>
    <property type="evidence" value="ECO:0000315"/>
    <property type="project" value="BHF-UCL"/>
</dbReference>
<dbReference type="GO" id="GO:0046320">
    <property type="term" value="P:regulation of fatty acid oxidation"/>
    <property type="evidence" value="ECO:0000304"/>
    <property type="project" value="BHF-UCL"/>
</dbReference>
<dbReference type="GO" id="GO:0006110">
    <property type="term" value="P:regulation of glycolytic process"/>
    <property type="evidence" value="ECO:0000315"/>
    <property type="project" value="BHF-UCL"/>
</dbReference>
<dbReference type="GO" id="GO:0016126">
    <property type="term" value="P:sterol biosynthetic process"/>
    <property type="evidence" value="ECO:0000304"/>
    <property type="project" value="BHF-UCL"/>
</dbReference>
<dbReference type="CDD" id="cd04618">
    <property type="entry name" value="CBS_euAMPK_gamma-like_repeat1"/>
    <property type="match status" value="1"/>
</dbReference>
<dbReference type="CDD" id="cd04641">
    <property type="entry name" value="CBS_euAMPK_gamma-like_repeat2"/>
    <property type="match status" value="1"/>
</dbReference>
<dbReference type="FunFam" id="3.10.580.10:FF:000003">
    <property type="entry name" value="Protein kinase AMP-activated non-catalytic subunit gamma 1"/>
    <property type="match status" value="1"/>
</dbReference>
<dbReference type="FunFam" id="3.10.580.10:FF:000004">
    <property type="entry name" value="Protein kinase AMP-activated non-catalytic subunit gamma 2"/>
    <property type="match status" value="1"/>
</dbReference>
<dbReference type="Gene3D" id="3.10.580.10">
    <property type="entry name" value="CBS-domain"/>
    <property type="match status" value="2"/>
</dbReference>
<dbReference type="InterPro" id="IPR050511">
    <property type="entry name" value="AMPK_gamma/SDS23_families"/>
</dbReference>
<dbReference type="InterPro" id="IPR000644">
    <property type="entry name" value="CBS_dom"/>
</dbReference>
<dbReference type="InterPro" id="IPR046342">
    <property type="entry name" value="CBS_dom_sf"/>
</dbReference>
<dbReference type="PANTHER" id="PTHR13780:SF122">
    <property type="entry name" value="5'-AMP-ACTIVATED PROTEIN KINASE SUBUNIT GAMMA-2"/>
    <property type="match status" value="1"/>
</dbReference>
<dbReference type="PANTHER" id="PTHR13780">
    <property type="entry name" value="AMP-ACTIVATED PROTEIN KINASE, GAMMA REGULATORY SUBUNIT"/>
    <property type="match status" value="1"/>
</dbReference>
<dbReference type="Pfam" id="PF00571">
    <property type="entry name" value="CBS"/>
    <property type="match status" value="3"/>
</dbReference>
<dbReference type="SMART" id="SM00116">
    <property type="entry name" value="CBS"/>
    <property type="match status" value="4"/>
</dbReference>
<dbReference type="SUPFAM" id="SSF54631">
    <property type="entry name" value="CBS-domain pair"/>
    <property type="match status" value="2"/>
</dbReference>
<dbReference type="PROSITE" id="PS51371">
    <property type="entry name" value="CBS"/>
    <property type="match status" value="4"/>
</dbReference>
<feature type="chain" id="PRO_0000204381" description="5'-AMP-activated protein kinase subunit gamma-2">
    <location>
        <begin position="1"/>
        <end position="569"/>
    </location>
</feature>
<feature type="domain" description="CBS 1" evidence="3">
    <location>
        <begin position="275"/>
        <end position="335"/>
    </location>
</feature>
<feature type="domain" description="CBS 2" evidence="3">
    <location>
        <begin position="357"/>
        <end position="415"/>
    </location>
</feature>
<feature type="domain" description="CBS 3" evidence="3">
    <location>
        <begin position="430"/>
        <end position="492"/>
    </location>
</feature>
<feature type="domain" description="CBS 4" evidence="3">
    <location>
        <begin position="504"/>
        <end position="562"/>
    </location>
</feature>
<feature type="region of interest" description="Disordered" evidence="4">
    <location>
        <begin position="1"/>
        <end position="222"/>
    </location>
</feature>
<feature type="short sequence motif" description="AMPK pseudosubstrate">
    <location>
        <begin position="370"/>
        <end position="391"/>
    </location>
</feature>
<feature type="compositionally biased region" description="Low complexity" evidence="4">
    <location>
        <begin position="156"/>
        <end position="167"/>
    </location>
</feature>
<feature type="compositionally biased region" description="Basic and acidic residues" evidence="4">
    <location>
        <begin position="179"/>
        <end position="189"/>
    </location>
</feature>
<feature type="compositionally biased region" description="Polar residues" evidence="4">
    <location>
        <begin position="192"/>
        <end position="212"/>
    </location>
</feature>
<feature type="binding site" evidence="1">
    <location>
        <position position="302"/>
    </location>
    <ligand>
        <name>ADP</name>
        <dbReference type="ChEBI" id="CHEBI:456216"/>
        <label>2</label>
    </ligand>
</feature>
<feature type="binding site" evidence="1">
    <location>
        <position position="302"/>
    </location>
    <ligand>
        <name>AMP</name>
        <dbReference type="ChEBI" id="CHEBI:456215"/>
        <label>2</label>
    </ligand>
</feature>
<feature type="binding site" evidence="1">
    <location>
        <position position="302"/>
    </location>
    <ligand>
        <name>ATP</name>
        <dbReference type="ChEBI" id="CHEBI:30616"/>
        <label>1</label>
    </ligand>
</feature>
<feature type="binding site" evidence="1">
    <location>
        <position position="302"/>
    </location>
    <ligand>
        <name>ATP</name>
        <dbReference type="ChEBI" id="CHEBI:30616"/>
        <label>2</label>
    </ligand>
</feature>
<feature type="binding site" evidence="1">
    <location>
        <begin position="317"/>
        <end position="322"/>
    </location>
    <ligand>
        <name>ADP</name>
        <dbReference type="ChEBI" id="CHEBI:456216"/>
        <label>1</label>
    </ligand>
</feature>
<feature type="binding site" evidence="1">
    <location>
        <begin position="317"/>
        <end position="322"/>
    </location>
    <ligand>
        <name>AMP</name>
        <dbReference type="ChEBI" id="CHEBI:456215"/>
        <label>1</label>
    </ligand>
</feature>
<feature type="binding site" evidence="1">
    <location>
        <begin position="317"/>
        <end position="322"/>
    </location>
    <ligand>
        <name>ATP</name>
        <dbReference type="ChEBI" id="CHEBI:30616"/>
        <label>1</label>
    </ligand>
</feature>
<feature type="binding site" evidence="1">
    <location>
        <position position="362"/>
    </location>
    <ligand>
        <name>ADP</name>
        <dbReference type="ChEBI" id="CHEBI:456216"/>
        <label>1</label>
    </ligand>
</feature>
<feature type="binding site" evidence="1">
    <location>
        <position position="362"/>
    </location>
    <ligand>
        <name>AMP</name>
        <dbReference type="ChEBI" id="CHEBI:456215"/>
        <label>1</label>
    </ligand>
</feature>
<feature type="binding site" evidence="1">
    <location>
        <position position="362"/>
    </location>
    <ligand>
        <name>ATP</name>
        <dbReference type="ChEBI" id="CHEBI:30616"/>
        <label>1</label>
    </ligand>
</feature>
<feature type="binding site" evidence="1">
    <location>
        <begin position="383"/>
        <end position="384"/>
    </location>
    <ligand>
        <name>ADP</name>
        <dbReference type="ChEBI" id="CHEBI:456216"/>
        <label>1</label>
    </ligand>
</feature>
<feature type="binding site" evidence="1">
    <location>
        <begin position="383"/>
        <end position="384"/>
    </location>
    <ligand>
        <name>AMP</name>
        <dbReference type="ChEBI" id="CHEBI:456215"/>
        <label>1</label>
    </ligand>
</feature>
<feature type="binding site" evidence="1">
    <location>
        <begin position="383"/>
        <end position="384"/>
    </location>
    <ligand>
        <name>ATP</name>
        <dbReference type="ChEBI" id="CHEBI:30616"/>
        <label>1</label>
    </ligand>
</feature>
<feature type="binding site" evidence="1">
    <location>
        <position position="383"/>
    </location>
    <ligand>
        <name>AMP</name>
        <dbReference type="ChEBI" id="CHEBI:456215"/>
        <label>3</label>
    </ligand>
</feature>
<feature type="binding site" evidence="1">
    <location>
        <position position="384"/>
    </location>
    <ligand>
        <name>ATP</name>
        <dbReference type="ChEBI" id="CHEBI:30616"/>
        <label>2</label>
    </ligand>
</feature>
<feature type="binding site" evidence="1">
    <location>
        <position position="402"/>
    </location>
    <ligand>
        <name>ADP</name>
        <dbReference type="ChEBI" id="CHEBI:456216"/>
        <label>2</label>
    </ligand>
</feature>
<feature type="binding site" evidence="1">
    <location>
        <position position="402"/>
    </location>
    <ligand>
        <name>AMP</name>
        <dbReference type="ChEBI" id="CHEBI:456215"/>
        <label>2</label>
    </ligand>
</feature>
<feature type="binding site" evidence="1">
    <location>
        <position position="402"/>
    </location>
    <ligand>
        <name>ATP</name>
        <dbReference type="ChEBI" id="CHEBI:30616"/>
        <label>2</label>
    </ligand>
</feature>
<feature type="binding site" evidence="1">
    <location>
        <position position="432"/>
    </location>
    <ligand>
        <name>AMP</name>
        <dbReference type="ChEBI" id="CHEBI:456215"/>
        <label>3</label>
    </ligand>
</feature>
<feature type="binding site" evidence="1">
    <location>
        <position position="437"/>
    </location>
    <ligand>
        <name>AMP</name>
        <dbReference type="ChEBI" id="CHEBI:456215"/>
        <label>3</label>
    </ligand>
</feature>
<feature type="binding site" evidence="1">
    <location>
        <begin position="458"/>
        <end position="459"/>
    </location>
    <ligand>
        <name>AMP</name>
        <dbReference type="ChEBI" id="CHEBI:456215"/>
        <label>3</label>
    </ligand>
</feature>
<feature type="binding site" evidence="1">
    <location>
        <begin position="474"/>
        <end position="477"/>
    </location>
    <ligand>
        <name>ADP</name>
        <dbReference type="ChEBI" id="CHEBI:456216"/>
        <label>2</label>
    </ligand>
</feature>
<feature type="binding site" evidence="1">
    <location>
        <begin position="474"/>
        <end position="477"/>
    </location>
    <ligand>
        <name>AMP</name>
        <dbReference type="ChEBI" id="CHEBI:456215"/>
        <label>2</label>
    </ligand>
</feature>
<feature type="binding site" evidence="1">
    <location>
        <begin position="474"/>
        <end position="477"/>
    </location>
    <ligand>
        <name>ATP</name>
        <dbReference type="ChEBI" id="CHEBI:30616"/>
        <label>2</label>
    </ligand>
</feature>
<feature type="binding site" evidence="1">
    <location>
        <position position="501"/>
    </location>
    <ligand>
        <name>ADP</name>
        <dbReference type="ChEBI" id="CHEBI:456216"/>
        <label>2</label>
    </ligand>
</feature>
<feature type="binding site" evidence="1">
    <location>
        <position position="501"/>
    </location>
    <ligand>
        <name>AMP</name>
        <dbReference type="ChEBI" id="CHEBI:456215"/>
        <label>2</label>
    </ligand>
</feature>
<feature type="binding site" evidence="1">
    <location>
        <position position="501"/>
    </location>
    <ligand>
        <name>ATP</name>
        <dbReference type="ChEBI" id="CHEBI:30616"/>
        <label>2</label>
    </ligand>
</feature>
<feature type="binding site" evidence="1">
    <location>
        <begin position="530"/>
        <end position="531"/>
    </location>
    <ligand>
        <name>ADP</name>
        <dbReference type="ChEBI" id="CHEBI:456216"/>
        <label>2</label>
    </ligand>
</feature>
<feature type="binding site" evidence="1">
    <location>
        <begin position="530"/>
        <end position="531"/>
    </location>
    <ligand>
        <name>AMP</name>
        <dbReference type="ChEBI" id="CHEBI:456215"/>
        <label>2</label>
    </ligand>
</feature>
<feature type="binding site" evidence="1">
    <location>
        <begin position="530"/>
        <end position="531"/>
    </location>
    <ligand>
        <name>ATP</name>
        <dbReference type="ChEBI" id="CHEBI:30616"/>
        <label>2</label>
    </ligand>
</feature>
<feature type="binding site" evidence="1">
    <location>
        <position position="530"/>
    </location>
    <ligand>
        <name>AMP</name>
        <dbReference type="ChEBI" id="CHEBI:456215"/>
        <label>3</label>
    </ligand>
</feature>
<feature type="binding site" evidence="1">
    <location>
        <begin position="546"/>
        <end position="549"/>
    </location>
    <ligand>
        <name>AMP</name>
        <dbReference type="ChEBI" id="CHEBI:456215"/>
        <label>3</label>
    </ligand>
</feature>
<feature type="modified residue" description="Phosphoserine" evidence="2">
    <location>
        <position position="65"/>
    </location>
</feature>
<feature type="modified residue" description="Phosphoserine" evidence="21">
    <location>
        <position position="71"/>
    </location>
</feature>
<feature type="modified residue" description="Phosphoserine" evidence="2">
    <location>
        <position position="73"/>
    </location>
</feature>
<feature type="modified residue" description="Phosphoserine" evidence="2">
    <location>
        <position position="90"/>
    </location>
</feature>
<feature type="modified residue" description="Phosphoserine" evidence="2">
    <location>
        <position position="138"/>
    </location>
</feature>
<feature type="modified residue" description="Phosphoserine" evidence="2">
    <location>
        <position position="143"/>
    </location>
</feature>
<feature type="modified residue" description="Phosphoserine" evidence="2">
    <location>
        <position position="161"/>
    </location>
</feature>
<feature type="modified residue" description="Phosphoserine" evidence="2">
    <location>
        <position position="162"/>
    </location>
</feature>
<feature type="modified residue" description="Phosphothreonine" evidence="2">
    <location>
        <position position="165"/>
    </location>
</feature>
<feature type="modified residue" description="Phosphoserine" evidence="2">
    <location>
        <position position="196"/>
    </location>
</feature>
<feature type="splice variant" id="VSP_000261" description="In isoform B." evidence="15 16 17 18 19">
    <location>
        <begin position="1"/>
        <end position="241"/>
    </location>
</feature>
<feature type="splice variant" id="VSP_015589" description="In isoform C." evidence="17">
    <location>
        <begin position="1"/>
        <end position="44"/>
    </location>
</feature>
<feature type="sequence variant" id="VAR_048250" description="In dbSNP:rs3207363.">
    <original>M</original>
    <variation>L</variation>
    <location>
        <position position="6"/>
    </location>
</feature>
<feature type="sequence variant" id="VAR_013264" description="In WPW and CMH6; impaired AMP- and ATP-binding; dbSNP:rs121908987." evidence="6 8 9">
    <original>R</original>
    <variation>Q</variation>
    <location>
        <position position="302"/>
    </location>
</feature>
<feature type="sequence variant" id="VAR_013265" description="In CMH6; severe." evidence="5">
    <original>R</original>
    <variation>RL</variation>
    <location>
        <position position="350"/>
    </location>
</feature>
<feature type="sequence variant" id="VAR_013266" description="In CMH6; severe; impaired AMP- and ATP-binding; dbSNP:rs121908988." evidence="5 9">
    <original>H</original>
    <variation>R</variation>
    <location>
        <position position="383"/>
    </location>
</feature>
<feature type="sequence variant" id="VAR_089864" description="Found in a patient with congenital junctional ectopic tachycardia; uncertain significance." evidence="14">
    <original>L</original>
    <variation>F</variation>
    <location>
        <position position="399"/>
    </location>
</feature>
<feature type="sequence variant" id="VAR_013267" description="In CMH6; severe; impaired AMP- and ATP-binding; dbSNP:rs28938173." evidence="8 9">
    <original>T</original>
    <variation>N</variation>
    <location>
        <position position="400"/>
    </location>
</feature>
<feature type="sequence variant" id="VAR_013268" description="In CMH6; severe; dbSNP:rs121908989." evidence="8">
    <original>N</original>
    <variation>I</variation>
    <location>
        <position position="488"/>
    </location>
</feature>
<feature type="sequence variant" id="VAR_032909" description="In WPW; absence of cardiac hypertrophy; onset in childhood; impaired AMP- and ATP-binding; dbSNP:rs121908990." evidence="7 9">
    <original>R</original>
    <variation>G</variation>
    <location>
        <position position="531"/>
    </location>
</feature>
<feature type="sequence variant" id="VAR_013269" description="In GSDH; reduction of binding affinities for AMP and ATP; loss of cooperative binding; enhanced basal activity; increased phosphorylation of the alpha-subunit; dbSNP:rs121908991." evidence="10">
    <original>R</original>
    <variation>Q</variation>
    <location>
        <position position="531"/>
    </location>
</feature>
<feature type="mutagenesis site" description="Induces phosphorylation by AMPK." evidence="11">
    <original>V</original>
    <variation>S</variation>
    <location>
        <position position="387"/>
    </location>
</feature>
<protein>
    <recommendedName>
        <fullName>5'-AMP-activated protein kinase subunit gamma-2</fullName>
        <shortName>AMPK gamma2</shortName>
        <shortName>AMPK subunit gamma-2</shortName>
    </recommendedName>
    <alternativeName>
        <fullName>H91620p</fullName>
    </alternativeName>
</protein>
<reference key="1">
    <citation type="submission" date="1999-03" db="EMBL/GenBank/DDBJ databases">
        <title>Human homolog of AMPK gamma-1 chain.</title>
        <authorList>
            <person name="Hattori A."/>
            <person name="Seki N."/>
            <person name="Hayashi A."/>
            <person name="Kozuma S."/>
            <person name="Muramatsu M."/>
            <person name="Saito T."/>
        </authorList>
    </citation>
    <scope>NUCLEOTIDE SEQUENCE [MRNA] (ISOFORM B)</scope>
</reference>
<reference key="2">
    <citation type="journal article" date="2000" name="Biochem. J.">
        <title>Characterization of AMP-activated protein kinase gamma-subunit isoforms and their role in AMP binding.</title>
        <authorList>
            <person name="Cheung P.C.F."/>
            <person name="Salt I.P."/>
            <person name="Davies S.P."/>
            <person name="Hardie D.G."/>
            <person name="Carling D."/>
        </authorList>
    </citation>
    <scope>NUCLEOTIDE SEQUENCE [MRNA] (ISOFORM A)</scope>
</reference>
<reference key="3">
    <citation type="journal article" date="2000" name="Genomics">
        <title>Molecular cloning, genomic organization, and mapping of PRKAG2, a heart abundant gamma-2 subunit of 5'-AMP-activated protein kinase, to human chromosome 7q36.</title>
        <authorList>
            <person name="Lang T.M."/>
            <person name="Yu L."/>
            <person name="Qiang T."/>
            <person name="Jiang J.M."/>
            <person name="Chen Z."/>
            <person name="Xin Y.R."/>
            <person name="Liu G.Y."/>
            <person name="Zhao S."/>
        </authorList>
    </citation>
    <scope>NUCLEOTIDE SEQUENCE [MRNA] (ISOFORM B)</scope>
</reference>
<reference key="4">
    <citation type="journal article" date="2004" name="Nat. Genet.">
        <title>Complete sequencing and characterization of 21,243 full-length human cDNAs.</title>
        <authorList>
            <person name="Ota T."/>
            <person name="Suzuki Y."/>
            <person name="Nishikawa T."/>
            <person name="Otsuki T."/>
            <person name="Sugiyama T."/>
            <person name="Irie R."/>
            <person name="Wakamatsu A."/>
            <person name="Hayashi K."/>
            <person name="Sato H."/>
            <person name="Nagai K."/>
            <person name="Kimura K."/>
            <person name="Makita H."/>
            <person name="Sekine M."/>
            <person name="Obayashi M."/>
            <person name="Nishi T."/>
            <person name="Shibahara T."/>
            <person name="Tanaka T."/>
            <person name="Ishii S."/>
            <person name="Yamamoto J."/>
            <person name="Saito K."/>
            <person name="Kawai Y."/>
            <person name="Isono Y."/>
            <person name="Nakamura Y."/>
            <person name="Nagahari K."/>
            <person name="Murakami K."/>
            <person name="Yasuda T."/>
            <person name="Iwayanagi T."/>
            <person name="Wagatsuma M."/>
            <person name="Shiratori A."/>
            <person name="Sudo H."/>
            <person name="Hosoiri T."/>
            <person name="Kaku Y."/>
            <person name="Kodaira H."/>
            <person name="Kondo H."/>
            <person name="Sugawara M."/>
            <person name="Takahashi M."/>
            <person name="Kanda K."/>
            <person name="Yokoi T."/>
            <person name="Furuya T."/>
            <person name="Kikkawa E."/>
            <person name="Omura Y."/>
            <person name="Abe K."/>
            <person name="Kamihara K."/>
            <person name="Katsuta N."/>
            <person name="Sato K."/>
            <person name="Tanikawa M."/>
            <person name="Yamazaki M."/>
            <person name="Ninomiya K."/>
            <person name="Ishibashi T."/>
            <person name="Yamashita H."/>
            <person name="Murakawa K."/>
            <person name="Fujimori K."/>
            <person name="Tanai H."/>
            <person name="Kimata M."/>
            <person name="Watanabe M."/>
            <person name="Hiraoka S."/>
            <person name="Chiba Y."/>
            <person name="Ishida S."/>
            <person name="Ono Y."/>
            <person name="Takiguchi S."/>
            <person name="Watanabe S."/>
            <person name="Yosida M."/>
            <person name="Hotuta T."/>
            <person name="Kusano J."/>
            <person name="Kanehori K."/>
            <person name="Takahashi-Fujii A."/>
            <person name="Hara H."/>
            <person name="Tanase T.-O."/>
            <person name="Nomura Y."/>
            <person name="Togiya S."/>
            <person name="Komai F."/>
            <person name="Hara R."/>
            <person name="Takeuchi K."/>
            <person name="Arita M."/>
            <person name="Imose N."/>
            <person name="Musashino K."/>
            <person name="Yuuki H."/>
            <person name="Oshima A."/>
            <person name="Sasaki N."/>
            <person name="Aotsuka S."/>
            <person name="Yoshikawa Y."/>
            <person name="Matsunawa H."/>
            <person name="Ichihara T."/>
            <person name="Shiohata N."/>
            <person name="Sano S."/>
            <person name="Moriya S."/>
            <person name="Momiyama H."/>
            <person name="Satoh N."/>
            <person name="Takami S."/>
            <person name="Terashima Y."/>
            <person name="Suzuki O."/>
            <person name="Nakagawa S."/>
            <person name="Senoh A."/>
            <person name="Mizoguchi H."/>
            <person name="Goto Y."/>
            <person name="Shimizu F."/>
            <person name="Wakebe H."/>
            <person name="Hishigaki H."/>
            <person name="Watanabe T."/>
            <person name="Sugiyama A."/>
            <person name="Takemoto M."/>
            <person name="Kawakami B."/>
            <person name="Yamazaki M."/>
            <person name="Watanabe K."/>
            <person name="Kumagai A."/>
            <person name="Itakura S."/>
            <person name="Fukuzumi Y."/>
            <person name="Fujimori Y."/>
            <person name="Komiyama M."/>
            <person name="Tashiro H."/>
            <person name="Tanigami A."/>
            <person name="Fujiwara T."/>
            <person name="Ono T."/>
            <person name="Yamada K."/>
            <person name="Fujii Y."/>
            <person name="Ozaki K."/>
            <person name="Hirao M."/>
            <person name="Ohmori Y."/>
            <person name="Kawabata A."/>
            <person name="Hikiji T."/>
            <person name="Kobatake N."/>
            <person name="Inagaki H."/>
            <person name="Ikema Y."/>
            <person name="Okamoto S."/>
            <person name="Okitani R."/>
            <person name="Kawakami T."/>
            <person name="Noguchi S."/>
            <person name="Itoh T."/>
            <person name="Shigeta K."/>
            <person name="Senba T."/>
            <person name="Matsumura K."/>
            <person name="Nakajima Y."/>
            <person name="Mizuno T."/>
            <person name="Morinaga M."/>
            <person name="Sasaki M."/>
            <person name="Togashi T."/>
            <person name="Oyama M."/>
            <person name="Hata H."/>
            <person name="Watanabe M."/>
            <person name="Komatsu T."/>
            <person name="Mizushima-Sugano J."/>
            <person name="Satoh T."/>
            <person name="Shirai Y."/>
            <person name="Takahashi Y."/>
            <person name="Nakagawa K."/>
            <person name="Okumura K."/>
            <person name="Nagase T."/>
            <person name="Nomura N."/>
            <person name="Kikuchi H."/>
            <person name="Masuho Y."/>
            <person name="Yamashita R."/>
            <person name="Nakai K."/>
            <person name="Yada T."/>
            <person name="Nakamura Y."/>
            <person name="Ohara O."/>
            <person name="Isogai T."/>
            <person name="Sugano S."/>
        </authorList>
    </citation>
    <scope>NUCLEOTIDE SEQUENCE [LARGE SCALE MRNA] (ISOFORM B)</scope>
    <source>
        <tissue>Placenta</tissue>
    </source>
</reference>
<reference key="5">
    <citation type="submission" date="2003-05" db="EMBL/GenBank/DDBJ databases">
        <title>Cloning of human full-length CDSs in BD Creator(TM) system donor vector.</title>
        <authorList>
            <person name="Kalnine N."/>
            <person name="Chen X."/>
            <person name="Rolfs A."/>
            <person name="Halleck A."/>
            <person name="Hines L."/>
            <person name="Eisenstein S."/>
            <person name="Koundinya M."/>
            <person name="Raphael J."/>
            <person name="Moreira D."/>
            <person name="Kelley T."/>
            <person name="LaBaer J."/>
            <person name="Lin Y."/>
            <person name="Phelan M."/>
            <person name="Farmer A."/>
        </authorList>
    </citation>
    <scope>NUCLEOTIDE SEQUENCE [LARGE SCALE MRNA] (ISOFORM B)</scope>
</reference>
<reference key="6">
    <citation type="journal article" date="2003" name="Nature">
        <title>The DNA sequence of human chromosome 7.</title>
        <authorList>
            <person name="Hillier L.W."/>
            <person name="Fulton R.S."/>
            <person name="Fulton L.A."/>
            <person name="Graves T.A."/>
            <person name="Pepin K.H."/>
            <person name="Wagner-McPherson C."/>
            <person name="Layman D."/>
            <person name="Maas J."/>
            <person name="Jaeger S."/>
            <person name="Walker R."/>
            <person name="Wylie K."/>
            <person name="Sekhon M."/>
            <person name="Becker M.C."/>
            <person name="O'Laughlin M.D."/>
            <person name="Schaller M.E."/>
            <person name="Fewell G.A."/>
            <person name="Delehaunty K.D."/>
            <person name="Miner T.L."/>
            <person name="Nash W.E."/>
            <person name="Cordes M."/>
            <person name="Du H."/>
            <person name="Sun H."/>
            <person name="Edwards J."/>
            <person name="Bradshaw-Cordum H."/>
            <person name="Ali J."/>
            <person name="Andrews S."/>
            <person name="Isak A."/>
            <person name="Vanbrunt A."/>
            <person name="Nguyen C."/>
            <person name="Du F."/>
            <person name="Lamar B."/>
            <person name="Courtney L."/>
            <person name="Kalicki J."/>
            <person name="Ozersky P."/>
            <person name="Bielicki L."/>
            <person name="Scott K."/>
            <person name="Holmes A."/>
            <person name="Harkins R."/>
            <person name="Harris A."/>
            <person name="Strong C.M."/>
            <person name="Hou S."/>
            <person name="Tomlinson C."/>
            <person name="Dauphin-Kohlberg S."/>
            <person name="Kozlowicz-Reilly A."/>
            <person name="Leonard S."/>
            <person name="Rohlfing T."/>
            <person name="Rock S.M."/>
            <person name="Tin-Wollam A.-M."/>
            <person name="Abbott A."/>
            <person name="Minx P."/>
            <person name="Maupin R."/>
            <person name="Strowmatt C."/>
            <person name="Latreille P."/>
            <person name="Miller N."/>
            <person name="Johnson D."/>
            <person name="Murray J."/>
            <person name="Woessner J.P."/>
            <person name="Wendl M.C."/>
            <person name="Yang S.-P."/>
            <person name="Schultz B.R."/>
            <person name="Wallis J.W."/>
            <person name="Spieth J."/>
            <person name="Bieri T.A."/>
            <person name="Nelson J.O."/>
            <person name="Berkowicz N."/>
            <person name="Wohldmann P.E."/>
            <person name="Cook L.L."/>
            <person name="Hickenbotham M.T."/>
            <person name="Eldred J."/>
            <person name="Williams D."/>
            <person name="Bedell J.A."/>
            <person name="Mardis E.R."/>
            <person name="Clifton S.W."/>
            <person name="Chissoe S.L."/>
            <person name="Marra M.A."/>
            <person name="Raymond C."/>
            <person name="Haugen E."/>
            <person name="Gillett W."/>
            <person name="Zhou Y."/>
            <person name="James R."/>
            <person name="Phelps K."/>
            <person name="Iadanoto S."/>
            <person name="Bubb K."/>
            <person name="Simms E."/>
            <person name="Levy R."/>
            <person name="Clendenning J."/>
            <person name="Kaul R."/>
            <person name="Kent W.J."/>
            <person name="Furey T.S."/>
            <person name="Baertsch R.A."/>
            <person name="Brent M.R."/>
            <person name="Keibler E."/>
            <person name="Flicek P."/>
            <person name="Bork P."/>
            <person name="Suyama M."/>
            <person name="Bailey J.A."/>
            <person name="Portnoy M.E."/>
            <person name="Torrents D."/>
            <person name="Chinwalla A.T."/>
            <person name="Gish W.R."/>
            <person name="Eddy S.R."/>
            <person name="McPherson J.D."/>
            <person name="Olson M.V."/>
            <person name="Eichler E.E."/>
            <person name="Green E.D."/>
            <person name="Waterston R.H."/>
            <person name="Wilson R.K."/>
        </authorList>
    </citation>
    <scope>NUCLEOTIDE SEQUENCE [LARGE SCALE GENOMIC DNA]</scope>
</reference>
<reference key="7">
    <citation type="journal article" date="2004" name="Genome Res.">
        <title>The status, quality, and expansion of the NIH full-length cDNA project: the Mammalian Gene Collection (MGC).</title>
        <authorList>
            <consortium name="The MGC Project Team"/>
        </authorList>
    </citation>
    <scope>NUCLEOTIDE SEQUENCE [LARGE SCALE MRNA] (ISOFORMS B AND C)</scope>
    <source>
        <tissue>Brain</tissue>
        <tissue>Liver</tissue>
    </source>
</reference>
<reference key="8">
    <citation type="journal article" date="2004" name="J. Clin. Invest.">
        <title>CBS domains form energy-sensing modules whose binding of adenosine ligands is disrupted by disease mutations.</title>
        <authorList>
            <person name="Scott J.W."/>
            <person name="Hawley S.A."/>
            <person name="Green K.A."/>
            <person name="Anis M."/>
            <person name="Stewart G."/>
            <person name="Scullion G.A."/>
            <person name="Norman D.G."/>
            <person name="Hardie D.G."/>
        </authorList>
    </citation>
    <scope>DOMAIN CBS</scope>
    <scope>AMP-BINDING</scope>
    <scope>ATP-BINDING</scope>
    <scope>CHARACTERIZATION OF VARIANTS WPW GLN-302; ARG-383 AND ASN-400</scope>
    <scope>CHARACTERIZATION OF VARIANT WPW GLY-531</scope>
    <scope>FUNCTION</scope>
</reference>
<reference key="9">
    <citation type="journal article" date="2007" name="EMBO J.">
        <title>Regulation of AMP-activated protein kinase by a pseudosubstrate sequence on the gamma subunit.</title>
        <authorList>
            <person name="Scott J.W."/>
            <person name="Ross F.A."/>
            <person name="Liu J.K."/>
            <person name="Hardie D.G."/>
        </authorList>
    </citation>
    <scope>DOMAIN AMPK PSEUDOSUBSTRATE</scope>
    <scope>MUTAGENESIS OF VAL-387</scope>
</reference>
<reference key="10">
    <citation type="journal article" date="2008" name="Mol. Cell">
        <title>Kinase-selective enrichment enables quantitative phosphoproteomics of the kinome across the cell cycle.</title>
        <authorList>
            <person name="Daub H."/>
            <person name="Olsen J.V."/>
            <person name="Bairlein M."/>
            <person name="Gnad F."/>
            <person name="Oppermann F.S."/>
            <person name="Korner R."/>
            <person name="Greff Z."/>
            <person name="Keri G."/>
            <person name="Stemmann O."/>
            <person name="Mann M."/>
        </authorList>
    </citation>
    <scope>IDENTIFICATION BY MASS SPECTROMETRY [LARGE SCALE ANALYSIS]</scope>
    <source>
        <tissue>Cervix carcinoma</tissue>
    </source>
</reference>
<reference key="11">
    <citation type="journal article" date="2009" name="Anal. Chem.">
        <title>Lys-N and trypsin cover complementary parts of the phosphoproteome in a refined SCX-based approach.</title>
        <authorList>
            <person name="Gauci S."/>
            <person name="Helbig A.O."/>
            <person name="Slijper M."/>
            <person name="Krijgsveld J."/>
            <person name="Heck A.J."/>
            <person name="Mohammed S."/>
        </authorList>
    </citation>
    <scope>IDENTIFICATION BY MASS SPECTROMETRY [LARGE SCALE ANALYSIS]</scope>
</reference>
<reference key="12">
    <citation type="journal article" date="2009" name="Mol. Cell. Proteomics">
        <title>Large-scale proteomics analysis of the human kinome.</title>
        <authorList>
            <person name="Oppermann F.S."/>
            <person name="Gnad F."/>
            <person name="Olsen J.V."/>
            <person name="Hornberger R."/>
            <person name="Greff Z."/>
            <person name="Keri G."/>
            <person name="Mann M."/>
            <person name="Daub H."/>
        </authorList>
    </citation>
    <scope>IDENTIFICATION BY MASS SPECTROMETRY [LARGE SCALE ANALYSIS]</scope>
</reference>
<reference key="13">
    <citation type="journal article" date="2011" name="Autophagy">
        <title>Ulk1-mediated phosphorylation of AMPK constitutes a negative regulatory feedback loop.</title>
        <authorList>
            <person name="Loffler A.S."/>
            <person name="Alers S."/>
            <person name="Dieterle A.M."/>
            <person name="Keppeler H."/>
            <person name="Franz-Wachtel M."/>
            <person name="Kundu M."/>
            <person name="Campbell D.G."/>
            <person name="Wesselborg S."/>
            <person name="Alessi D.R."/>
            <person name="Stork B."/>
        </authorList>
    </citation>
    <scope>PHOSPHORYLATION BY ULK1</scope>
</reference>
<reference key="14">
    <citation type="journal article" date="2007" name="Circ. Res.">
        <title>AMP-activated protein kinase in metabolic control and insulin signaling.</title>
        <authorList>
            <person name="Towler M.C."/>
            <person name="Hardie D.G."/>
        </authorList>
    </citation>
    <scope>REVIEW ON FUNCTION</scope>
</reference>
<reference key="15">
    <citation type="journal article" date="2007" name="Nat. Rev. Mol. Cell Biol.">
        <title>AMP-activated/SNF1 protein kinases: conserved guardians of cellular energy.</title>
        <authorList>
            <person name="Hardie D.G."/>
        </authorList>
    </citation>
    <scope>REVIEW ON FUNCTION</scope>
</reference>
<reference key="16">
    <citation type="journal article" date="2014" name="J. Biol. Chem.">
        <title>Cross-talk between two essential nutrient-sensitive enzymes: O-GlcNAc transferase (OGT) and AMP-activated protein kinase (AMPK).</title>
        <authorList>
            <person name="Bullen J.W."/>
            <person name="Balsbaugh J.L."/>
            <person name="Chanda D."/>
            <person name="Shabanowitz J."/>
            <person name="Hunt D.F."/>
            <person name="Neumann D."/>
            <person name="Hart G.W."/>
        </authorList>
    </citation>
    <scope>FUNCTION</scope>
    <scope>GLYCOSYLATION</scope>
</reference>
<reference key="17">
    <citation type="journal article" date="2014" name="J. Proteomics">
        <title>An enzyme assisted RP-RPLC approach for in-depth analysis of human liver phosphoproteome.</title>
        <authorList>
            <person name="Bian Y."/>
            <person name="Song C."/>
            <person name="Cheng K."/>
            <person name="Dong M."/>
            <person name="Wang F."/>
            <person name="Huang J."/>
            <person name="Sun D."/>
            <person name="Wang L."/>
            <person name="Ye M."/>
            <person name="Zou H."/>
        </authorList>
    </citation>
    <scope>PHOSPHORYLATION [LARGE SCALE ANALYSIS] AT SER-71</scope>
    <scope>IDENTIFICATION BY MASS SPECTROMETRY [LARGE SCALE ANALYSIS]</scope>
    <source>
        <tissue>Liver</tissue>
    </source>
</reference>
<reference key="18">
    <citation type="journal article" date="2001" name="Circulation">
        <title>Novel PRKAG2 mutation responsible for the genetic syndrome of ventricular preexcitation and conduction system disease with childhood onset and absence of cardiac hypertrophy.</title>
        <authorList>
            <person name="Gollob M.H."/>
            <person name="Seger J.J."/>
            <person name="Gollob T.N."/>
            <person name="Tapscott T."/>
            <person name="Gonzales O."/>
            <person name="Bachinski L."/>
            <person name="Roberts R."/>
        </authorList>
    </citation>
    <scope>VARIANT WPW GLY-531</scope>
</reference>
<reference key="19">
    <citation type="journal article" date="2001" name="Hum. Mol. Genet.">
        <title>Mutations in the gamma(2) subunit of AMP-activated protein kinase cause familial hypertrophic cardiomyopathy: evidence for the central role of energy compromise in disease pathogenesis.</title>
        <authorList>
            <person name="Blair E."/>
            <person name="Redwood C."/>
            <person name="Ashrafian H."/>
            <person name="Oliveira M."/>
            <person name="Broxholme J."/>
            <person name="Kerr B."/>
            <person name="Salmon A."/>
            <person name="Oestman-Smith I."/>
            <person name="Watkins H."/>
        </authorList>
    </citation>
    <scope>VARIANTS CMH6 LEU-350 INS AND ARG-383</scope>
</reference>
<reference key="20">
    <citation type="journal article" date="2001" name="N. Engl. J. Med.">
        <title>Identification of a gene responsible for familial Wolff-Parkinson-White syndrome.</title>
        <authorList>
            <person name="Gollob M.H."/>
            <person name="Green M.S."/>
            <person name="Tang A.S.-L."/>
            <person name="Gollob T."/>
            <person name="Karibe A."/>
            <person name="Al Sayegh A.H."/>
            <person name="Ahmad F."/>
            <person name="Lozado R."/>
            <person name="Shah G."/>
            <person name="Fananapazir L."/>
            <person name="Bachinski L.L."/>
            <person name="Roberts R."/>
        </authorList>
    </citation>
    <scope>VARIANT WPW GLN-302</scope>
</reference>
<reference key="21">
    <citation type="journal article" date="2001" name="N. Engl. J. Med.">
        <authorList>
            <person name="Gollob M.H."/>
            <person name="Green M.S."/>
            <person name="Tang A.S.-L."/>
            <person name="Gollob T."/>
            <person name="Karibe A."/>
            <person name="Al Sayegh A.H."/>
            <person name="Ahmad F."/>
            <person name="Lozado R."/>
            <person name="Shah G."/>
            <person name="Fananapazir L."/>
            <person name="Bachinski L.L."/>
            <person name="Roberts R."/>
        </authorList>
    </citation>
    <scope>ERRATUM OF PUBMED:11407343</scope>
</reference>
<reference key="22">
    <citation type="journal article" date="2002" name="N. Engl. J. Med.">
        <authorList>
            <person name="Gollob M.H."/>
            <person name="Green M.S."/>
            <person name="Tang A.S.-L."/>
            <person name="Gollob T."/>
            <person name="Karibe A."/>
            <person name="Al Sayegh A.H."/>
            <person name="Ahmad F."/>
            <person name="Lozado R."/>
            <person name="Shah G."/>
            <person name="Fananapazir L."/>
            <person name="Bachinski L.L."/>
            <person name="Roberts R."/>
        </authorList>
    </citation>
    <scope>ERRATUM OF PUBMED:11407343</scope>
</reference>
<reference key="23">
    <citation type="journal article" date="2002" name="J. Clin. Invest.">
        <title>Constitutively active AMP kinase mutations cause glycogen storage disease mimicking hypertrophic cardiomyopathy.</title>
        <authorList>
            <person name="Arad M."/>
            <person name="Benson D.W."/>
            <person name="Perez-Atayde A.R."/>
            <person name="McKenna W.J."/>
            <person name="Sparks E.A."/>
            <person name="Kanter R.J."/>
            <person name="McGarry K."/>
            <person name="Seidman J.G."/>
            <person name="Seidman C.E."/>
        </authorList>
    </citation>
    <scope>VARIANTS CMH6 GLN-302; ASN-400 AND ILE-488</scope>
</reference>
<reference key="24">
    <citation type="journal article" date="2005" name="Am. J. Hum. Genet.">
        <title>Fatal congenital heart glycogenosis caused by a recurrent activating R531Q mutation in the gamma 2-subunit of AMP-activated protein kinase (PRKAG2), not by phosphorylase kinase deficiency.</title>
        <authorList>
            <person name="Burwinkel B."/>
            <person name="Scott J.W."/>
            <person name="Buehrer C."/>
            <person name="van Landeghem F.K.H."/>
            <person name="Cox G.F."/>
            <person name="Wilson C.J."/>
            <person name="Grahame Hardie D."/>
            <person name="Kilimann M.W."/>
        </authorList>
    </citation>
    <scope>VARIANT GSDH GLN-531</scope>
    <scope>CHARACTERIZATION OF VARIANT GSDH GLN-531</scope>
</reference>
<reference key="25">
    <citation type="journal article" date="2024" name="Clin. Genet.">
        <title>Reduced kinase function in two ultra-rare TNNI3K variants in families with congenital junctional ectopic tachycardia.</title>
        <authorList>
            <person name="Pham C."/>
            <person name="Koopmann T.T."/>
            <person name="Vinocur J.M."/>
            <person name="Blom N.A."/>
            <person name="Nogueira Silbiger V."/>
            <person name="Mittal K."/>
            <person name="Bootsma M."/>
            <person name="Palm K.C.A."/>
            <person name="Clur S.B."/>
            <person name="Barge-Schaapveld D.Q.C.M."/>
            <person name="Hamilton R.M."/>
            <person name="Lodder E.M."/>
        </authorList>
    </citation>
    <scope>VARIANT PHE-399</scope>
</reference>
<keyword id="KW-0025">Alternative splicing</keyword>
<keyword id="KW-0067">ATP-binding</keyword>
<keyword id="KW-0122">Cardiomyopathy</keyword>
<keyword id="KW-0129">CBS domain</keyword>
<keyword id="KW-0225">Disease variant</keyword>
<keyword id="KW-0275">Fatty acid biosynthesis</keyword>
<keyword id="KW-0276">Fatty acid metabolism</keyword>
<keyword id="KW-0322">Glycogen storage disease</keyword>
<keyword id="KW-0325">Glycoprotein</keyword>
<keyword id="KW-0444">Lipid biosynthesis</keyword>
<keyword id="KW-0443">Lipid metabolism</keyword>
<keyword id="KW-0547">Nucleotide-binding</keyword>
<keyword id="KW-0597">Phosphoprotein</keyword>
<keyword id="KW-1267">Proteomics identification</keyword>
<keyword id="KW-1185">Reference proteome</keyword>
<keyword id="KW-0677">Repeat</keyword>
<proteinExistence type="evidence at protein level"/>